<sequence>MTISHIDPEYQANTIEPSVQQDWENRKVFKVADTVEGKHRYILSMFPYPSGKLHMGHVRNYTIGDVISRFYRLKGETVLQPMGWDAFGLPAENAAIAHKVAPAKWTFENIAYMRDQLKKLGLSVDWDREFATCTPEYYHWEQWLFVQLYKKGLIYRKLSTVNWDPVDQTVLANEQVENGRGWRSGALVEKRDIPMYYFRITDYAQELLDDLDTLQDGWPQQVLTMQRNWIGRSTGMEITFPSANTEIYADGLTVYTTRADTLMGVTYVAVAAEHPLALKAAENNPELAAFIEECRMGSVAEADLATAEKKGMATGLFVKHPVTGEELPVWIANYVLMSYGSGAVMAVPAHDERDFEFANKFNLPIKQVIDAKGADDADYSATEWQEWYGSKEGKLVNSGEFDGLEFQAAFDAFLAKLEPQGLANSKVQFRLRDWGVSRQRYWGCPIPMINCDTCGQVTVPEDQLPVVLPTDVVPDGSGNPLNKMPEFYETKCPCCGGDARRETDTLDTFVESSWYYARYASPDFTGGMVKPEAAKNWLPVNQYIGGVEHAILHLLYARFFHKLMRDEGVVQGNEPFTNLLTQGMVLADTFYREAENGKKTWFNPADIELERDEKGRIISAKYSGDGQEVIIGGQEKMSKSKNNGIDPQAIIDQYGADTARVFMMFAAPPDQSLEWSDAGVEGANRFLKRVWRLVASFLEKGNSATAIDKANLSKDAQDLRRKTHETIQKVSDDIERRHAFNTAIAALMELLNASNKFEAKDDNDVAVEREAITTLLTLLAPFAPHLSQTLLAQFGTDLTEATFPEVDASALTRNTQTIVVQVNGKLRGKLEVSVDISKDELLAQAKALPEVQQFLTGPTKKEIVVPNKLVNLVV</sequence>
<accession>B0V5H2</accession>
<feature type="chain" id="PRO_1000091281" description="Leucine--tRNA ligase">
    <location>
        <begin position="1"/>
        <end position="874"/>
    </location>
</feature>
<feature type="short sequence motif" description="'HIGH' region">
    <location>
        <begin position="47"/>
        <end position="57"/>
    </location>
</feature>
<feature type="short sequence motif" description="'KMSKS' region">
    <location>
        <begin position="636"/>
        <end position="640"/>
    </location>
</feature>
<feature type="binding site" evidence="1">
    <location>
        <position position="639"/>
    </location>
    <ligand>
        <name>ATP</name>
        <dbReference type="ChEBI" id="CHEBI:30616"/>
    </ligand>
</feature>
<proteinExistence type="inferred from homology"/>
<gene>
    <name evidence="1" type="primary">leuS</name>
    <name type="ordered locus">ABAYE3244</name>
</gene>
<evidence type="ECO:0000255" key="1">
    <source>
        <dbReference type="HAMAP-Rule" id="MF_00049"/>
    </source>
</evidence>
<name>SYL_ACIBY</name>
<comment type="catalytic activity">
    <reaction evidence="1">
        <text>tRNA(Leu) + L-leucine + ATP = L-leucyl-tRNA(Leu) + AMP + diphosphate</text>
        <dbReference type="Rhea" id="RHEA:11688"/>
        <dbReference type="Rhea" id="RHEA-COMP:9613"/>
        <dbReference type="Rhea" id="RHEA-COMP:9622"/>
        <dbReference type="ChEBI" id="CHEBI:30616"/>
        <dbReference type="ChEBI" id="CHEBI:33019"/>
        <dbReference type="ChEBI" id="CHEBI:57427"/>
        <dbReference type="ChEBI" id="CHEBI:78442"/>
        <dbReference type="ChEBI" id="CHEBI:78494"/>
        <dbReference type="ChEBI" id="CHEBI:456215"/>
        <dbReference type="EC" id="6.1.1.4"/>
    </reaction>
</comment>
<comment type="subcellular location">
    <subcellularLocation>
        <location evidence="1">Cytoplasm</location>
    </subcellularLocation>
</comment>
<comment type="similarity">
    <text evidence="1">Belongs to the class-I aminoacyl-tRNA synthetase family.</text>
</comment>
<keyword id="KW-0030">Aminoacyl-tRNA synthetase</keyword>
<keyword id="KW-0067">ATP-binding</keyword>
<keyword id="KW-0963">Cytoplasm</keyword>
<keyword id="KW-0436">Ligase</keyword>
<keyword id="KW-0547">Nucleotide-binding</keyword>
<keyword id="KW-0648">Protein biosynthesis</keyword>
<reference key="1">
    <citation type="journal article" date="2008" name="PLoS ONE">
        <title>Comparative analysis of Acinetobacters: three genomes for three lifestyles.</title>
        <authorList>
            <person name="Vallenet D."/>
            <person name="Nordmann P."/>
            <person name="Barbe V."/>
            <person name="Poirel L."/>
            <person name="Mangenot S."/>
            <person name="Bataille E."/>
            <person name="Dossat C."/>
            <person name="Gas S."/>
            <person name="Kreimeyer A."/>
            <person name="Lenoble P."/>
            <person name="Oztas S."/>
            <person name="Poulain J."/>
            <person name="Segurens B."/>
            <person name="Robert C."/>
            <person name="Abergel C."/>
            <person name="Claverie J.-M."/>
            <person name="Raoult D."/>
            <person name="Medigue C."/>
            <person name="Weissenbach J."/>
            <person name="Cruveiller S."/>
        </authorList>
    </citation>
    <scope>NUCLEOTIDE SEQUENCE [LARGE SCALE GENOMIC DNA]</scope>
    <source>
        <strain>AYE</strain>
    </source>
</reference>
<protein>
    <recommendedName>
        <fullName evidence="1">Leucine--tRNA ligase</fullName>
        <ecNumber evidence="1">6.1.1.4</ecNumber>
    </recommendedName>
    <alternativeName>
        <fullName evidence="1">Leucyl-tRNA synthetase</fullName>
        <shortName evidence="1">LeuRS</shortName>
    </alternativeName>
</protein>
<organism>
    <name type="scientific">Acinetobacter baumannii (strain AYE)</name>
    <dbReference type="NCBI Taxonomy" id="509173"/>
    <lineage>
        <taxon>Bacteria</taxon>
        <taxon>Pseudomonadati</taxon>
        <taxon>Pseudomonadota</taxon>
        <taxon>Gammaproteobacteria</taxon>
        <taxon>Moraxellales</taxon>
        <taxon>Moraxellaceae</taxon>
        <taxon>Acinetobacter</taxon>
        <taxon>Acinetobacter calcoaceticus/baumannii complex</taxon>
    </lineage>
</organism>
<dbReference type="EC" id="6.1.1.4" evidence="1"/>
<dbReference type="EMBL" id="CU459141">
    <property type="protein sequence ID" value="CAM88046.1"/>
    <property type="molecule type" value="Genomic_DNA"/>
</dbReference>
<dbReference type="RefSeq" id="WP_000155773.1">
    <property type="nucleotide sequence ID" value="NZ_JBDGFB010000008.1"/>
</dbReference>
<dbReference type="SMR" id="B0V5H2"/>
<dbReference type="EnsemblBacteria" id="CAM88046">
    <property type="protein sequence ID" value="CAM88046"/>
    <property type="gene ID" value="ABAYE3244"/>
</dbReference>
<dbReference type="GeneID" id="92892523"/>
<dbReference type="KEGG" id="aby:ABAYE3244"/>
<dbReference type="HOGENOM" id="CLU_004427_0_0_6"/>
<dbReference type="GO" id="GO:0005829">
    <property type="term" value="C:cytosol"/>
    <property type="evidence" value="ECO:0007669"/>
    <property type="project" value="TreeGrafter"/>
</dbReference>
<dbReference type="GO" id="GO:0002161">
    <property type="term" value="F:aminoacyl-tRNA deacylase activity"/>
    <property type="evidence" value="ECO:0007669"/>
    <property type="project" value="InterPro"/>
</dbReference>
<dbReference type="GO" id="GO:0005524">
    <property type="term" value="F:ATP binding"/>
    <property type="evidence" value="ECO:0007669"/>
    <property type="project" value="UniProtKB-UniRule"/>
</dbReference>
<dbReference type="GO" id="GO:0004823">
    <property type="term" value="F:leucine-tRNA ligase activity"/>
    <property type="evidence" value="ECO:0007669"/>
    <property type="project" value="UniProtKB-UniRule"/>
</dbReference>
<dbReference type="GO" id="GO:0006429">
    <property type="term" value="P:leucyl-tRNA aminoacylation"/>
    <property type="evidence" value="ECO:0007669"/>
    <property type="project" value="UniProtKB-UniRule"/>
</dbReference>
<dbReference type="CDD" id="cd07958">
    <property type="entry name" value="Anticodon_Ia_Leu_BEm"/>
    <property type="match status" value="1"/>
</dbReference>
<dbReference type="CDD" id="cd00812">
    <property type="entry name" value="LeuRS_core"/>
    <property type="match status" value="1"/>
</dbReference>
<dbReference type="FunFam" id="1.10.730.10:FF:000003">
    <property type="entry name" value="Leucine--tRNA ligase"/>
    <property type="match status" value="1"/>
</dbReference>
<dbReference type="FunFam" id="2.20.28.290:FF:000001">
    <property type="entry name" value="Leucine--tRNA ligase"/>
    <property type="match status" value="1"/>
</dbReference>
<dbReference type="FunFam" id="3.40.50.620:FF:000003">
    <property type="entry name" value="Leucine--tRNA ligase"/>
    <property type="match status" value="1"/>
</dbReference>
<dbReference type="FunFam" id="3.40.50.620:FF:000124">
    <property type="entry name" value="Leucine--tRNA ligase"/>
    <property type="match status" value="1"/>
</dbReference>
<dbReference type="FunFam" id="3.90.740.10:FF:000012">
    <property type="entry name" value="Leucine--tRNA ligase"/>
    <property type="match status" value="1"/>
</dbReference>
<dbReference type="Gene3D" id="2.20.28.290">
    <property type="match status" value="1"/>
</dbReference>
<dbReference type="Gene3D" id="3.10.20.590">
    <property type="match status" value="1"/>
</dbReference>
<dbReference type="Gene3D" id="3.40.50.620">
    <property type="entry name" value="HUPs"/>
    <property type="match status" value="2"/>
</dbReference>
<dbReference type="Gene3D" id="1.10.730.10">
    <property type="entry name" value="Isoleucyl-tRNA Synthetase, Domain 1"/>
    <property type="match status" value="1"/>
</dbReference>
<dbReference type="Gene3D" id="3.90.740.10">
    <property type="entry name" value="Valyl/Leucyl/Isoleucyl-tRNA synthetase, editing domain"/>
    <property type="match status" value="1"/>
</dbReference>
<dbReference type="HAMAP" id="MF_00049_B">
    <property type="entry name" value="Leu_tRNA_synth_B"/>
    <property type="match status" value="1"/>
</dbReference>
<dbReference type="InterPro" id="IPR001412">
    <property type="entry name" value="aa-tRNA-synth_I_CS"/>
</dbReference>
<dbReference type="InterPro" id="IPR002300">
    <property type="entry name" value="aa-tRNA-synth_Ia"/>
</dbReference>
<dbReference type="InterPro" id="IPR002302">
    <property type="entry name" value="Leu-tRNA-ligase"/>
</dbReference>
<dbReference type="InterPro" id="IPR025709">
    <property type="entry name" value="Leu_tRNA-synth_edit"/>
</dbReference>
<dbReference type="InterPro" id="IPR013155">
    <property type="entry name" value="M/V/L/I-tRNA-synth_anticd-bd"/>
</dbReference>
<dbReference type="InterPro" id="IPR015413">
    <property type="entry name" value="Methionyl/Leucyl_tRNA_Synth"/>
</dbReference>
<dbReference type="InterPro" id="IPR014729">
    <property type="entry name" value="Rossmann-like_a/b/a_fold"/>
</dbReference>
<dbReference type="InterPro" id="IPR009080">
    <property type="entry name" value="tRNAsynth_Ia_anticodon-bd"/>
</dbReference>
<dbReference type="InterPro" id="IPR009008">
    <property type="entry name" value="Val/Leu/Ile-tRNA-synth_edit"/>
</dbReference>
<dbReference type="NCBIfam" id="TIGR00396">
    <property type="entry name" value="leuS_bact"/>
    <property type="match status" value="1"/>
</dbReference>
<dbReference type="PANTHER" id="PTHR43740:SF2">
    <property type="entry name" value="LEUCINE--TRNA LIGASE, MITOCHONDRIAL"/>
    <property type="match status" value="1"/>
</dbReference>
<dbReference type="PANTHER" id="PTHR43740">
    <property type="entry name" value="LEUCYL-TRNA SYNTHETASE"/>
    <property type="match status" value="1"/>
</dbReference>
<dbReference type="Pfam" id="PF08264">
    <property type="entry name" value="Anticodon_1"/>
    <property type="match status" value="1"/>
</dbReference>
<dbReference type="Pfam" id="PF00133">
    <property type="entry name" value="tRNA-synt_1"/>
    <property type="match status" value="1"/>
</dbReference>
<dbReference type="Pfam" id="PF13603">
    <property type="entry name" value="tRNA-synt_1_2"/>
    <property type="match status" value="1"/>
</dbReference>
<dbReference type="Pfam" id="PF09334">
    <property type="entry name" value="tRNA-synt_1g"/>
    <property type="match status" value="1"/>
</dbReference>
<dbReference type="PRINTS" id="PR00985">
    <property type="entry name" value="TRNASYNTHLEU"/>
</dbReference>
<dbReference type="SUPFAM" id="SSF47323">
    <property type="entry name" value="Anticodon-binding domain of a subclass of class I aminoacyl-tRNA synthetases"/>
    <property type="match status" value="1"/>
</dbReference>
<dbReference type="SUPFAM" id="SSF52374">
    <property type="entry name" value="Nucleotidylyl transferase"/>
    <property type="match status" value="1"/>
</dbReference>
<dbReference type="SUPFAM" id="SSF50677">
    <property type="entry name" value="ValRS/IleRS/LeuRS editing domain"/>
    <property type="match status" value="1"/>
</dbReference>
<dbReference type="PROSITE" id="PS00178">
    <property type="entry name" value="AA_TRNA_LIGASE_I"/>
    <property type="match status" value="1"/>
</dbReference>